<comment type="cofactor">
    <cofactor evidence="1">
        <name>Zn(2+)</name>
        <dbReference type="ChEBI" id="CHEBI:29105"/>
    </cofactor>
    <text evidence="1">Binds 3 Zn(2+) ions per subunit.</text>
</comment>
<comment type="subunit">
    <text evidence="1">Homotrimer.</text>
</comment>
<comment type="similarity">
    <text evidence="1">Belongs to the PHP family.</text>
</comment>
<feature type="chain" id="PRO_1000147144" description="Probable phosphatase YcdX">
    <location>
        <begin position="1"/>
        <end position="245"/>
    </location>
</feature>
<feature type="binding site" evidence="1">
    <location>
        <position position="7"/>
    </location>
    <ligand>
        <name>Zn(2+)</name>
        <dbReference type="ChEBI" id="CHEBI:29105"/>
        <label>1</label>
    </ligand>
</feature>
<feature type="binding site" evidence="1">
    <location>
        <position position="9"/>
    </location>
    <ligand>
        <name>Zn(2+)</name>
        <dbReference type="ChEBI" id="CHEBI:29105"/>
        <label>1</label>
    </ligand>
</feature>
<feature type="binding site" evidence="1">
    <location>
        <position position="15"/>
    </location>
    <ligand>
        <name>Zn(2+)</name>
        <dbReference type="ChEBI" id="CHEBI:29105"/>
        <label>2</label>
    </ligand>
</feature>
<feature type="binding site" evidence="1">
    <location>
        <position position="40"/>
    </location>
    <ligand>
        <name>Zn(2+)</name>
        <dbReference type="ChEBI" id="CHEBI:29105"/>
        <label>2</label>
    </ligand>
</feature>
<feature type="binding site" evidence="1">
    <location>
        <position position="73"/>
    </location>
    <ligand>
        <name>Zn(2+)</name>
        <dbReference type="ChEBI" id="CHEBI:29105"/>
        <label>1</label>
    </ligand>
</feature>
<feature type="binding site" evidence="1">
    <location>
        <position position="73"/>
    </location>
    <ligand>
        <name>Zn(2+)</name>
        <dbReference type="ChEBI" id="CHEBI:29105"/>
        <label>3</label>
    </ligand>
</feature>
<feature type="binding site" evidence="1">
    <location>
        <position position="101"/>
    </location>
    <ligand>
        <name>Zn(2+)</name>
        <dbReference type="ChEBI" id="CHEBI:29105"/>
        <label>3</label>
    </ligand>
</feature>
<feature type="binding site" evidence="1">
    <location>
        <position position="131"/>
    </location>
    <ligand>
        <name>Zn(2+)</name>
        <dbReference type="ChEBI" id="CHEBI:29105"/>
        <label>3</label>
    </ligand>
</feature>
<feature type="binding site" evidence="1">
    <location>
        <position position="192"/>
    </location>
    <ligand>
        <name>Zn(2+)</name>
        <dbReference type="ChEBI" id="CHEBI:29105"/>
        <label>1</label>
    </ligand>
</feature>
<feature type="binding site" evidence="1">
    <location>
        <position position="194"/>
    </location>
    <ligand>
        <name>Zn(2+)</name>
        <dbReference type="ChEBI" id="CHEBI:29105"/>
        <label>2</label>
    </ligand>
</feature>
<organism>
    <name type="scientific">Salmonella newport (strain SL254)</name>
    <dbReference type="NCBI Taxonomy" id="423368"/>
    <lineage>
        <taxon>Bacteria</taxon>
        <taxon>Pseudomonadati</taxon>
        <taxon>Pseudomonadota</taxon>
        <taxon>Gammaproteobacteria</taxon>
        <taxon>Enterobacterales</taxon>
        <taxon>Enterobacteriaceae</taxon>
        <taxon>Salmonella</taxon>
    </lineage>
</organism>
<protein>
    <recommendedName>
        <fullName evidence="1">Probable phosphatase YcdX</fullName>
        <ecNumber evidence="1">3.1.3.-</ecNumber>
    </recommendedName>
</protein>
<gene>
    <name evidence="1" type="primary">ycdX</name>
    <name type="ordered locus">SNSL254_A1232</name>
</gene>
<accession>B4T2W7</accession>
<reference key="1">
    <citation type="journal article" date="2011" name="J. Bacteriol.">
        <title>Comparative genomics of 28 Salmonella enterica isolates: evidence for CRISPR-mediated adaptive sublineage evolution.</title>
        <authorList>
            <person name="Fricke W.F."/>
            <person name="Mammel M.K."/>
            <person name="McDermott P.F."/>
            <person name="Tartera C."/>
            <person name="White D.G."/>
            <person name="Leclerc J.E."/>
            <person name="Ravel J."/>
            <person name="Cebula T.A."/>
        </authorList>
    </citation>
    <scope>NUCLEOTIDE SEQUENCE [LARGE SCALE GENOMIC DNA]</scope>
    <source>
        <strain>SL254</strain>
    </source>
</reference>
<name>YCDX_SALNS</name>
<dbReference type="EC" id="3.1.3.-" evidence="1"/>
<dbReference type="EMBL" id="CP001113">
    <property type="protein sequence ID" value="ACF63336.1"/>
    <property type="molecule type" value="Genomic_DNA"/>
</dbReference>
<dbReference type="RefSeq" id="WP_000283643.1">
    <property type="nucleotide sequence ID" value="NZ_CCMR01000003.1"/>
</dbReference>
<dbReference type="SMR" id="B4T2W7"/>
<dbReference type="KEGG" id="see:SNSL254_A1232"/>
<dbReference type="HOGENOM" id="CLU_061999_0_1_6"/>
<dbReference type="Proteomes" id="UP000008824">
    <property type="component" value="Chromosome"/>
</dbReference>
<dbReference type="GO" id="GO:0005829">
    <property type="term" value="C:cytosol"/>
    <property type="evidence" value="ECO:0007669"/>
    <property type="project" value="TreeGrafter"/>
</dbReference>
<dbReference type="GO" id="GO:0016791">
    <property type="term" value="F:phosphatase activity"/>
    <property type="evidence" value="ECO:0007669"/>
    <property type="project" value="UniProtKB-UniRule"/>
</dbReference>
<dbReference type="GO" id="GO:0008270">
    <property type="term" value="F:zinc ion binding"/>
    <property type="evidence" value="ECO:0007669"/>
    <property type="project" value="UniProtKB-UniRule"/>
</dbReference>
<dbReference type="GO" id="GO:0071978">
    <property type="term" value="P:bacterial-type flagellum-dependent swarming motility"/>
    <property type="evidence" value="ECO:0007669"/>
    <property type="project" value="TreeGrafter"/>
</dbReference>
<dbReference type="CDD" id="cd07437">
    <property type="entry name" value="PHP_HisPPase_Ycdx_like"/>
    <property type="match status" value="1"/>
</dbReference>
<dbReference type="FunFam" id="3.20.20.140:FF:000008">
    <property type="entry name" value="Probable phosphatase YcdX"/>
    <property type="match status" value="1"/>
</dbReference>
<dbReference type="Gene3D" id="3.20.20.140">
    <property type="entry name" value="Metal-dependent hydrolases"/>
    <property type="match status" value="1"/>
</dbReference>
<dbReference type="HAMAP" id="MF_01561">
    <property type="entry name" value="YcdX_phosphat"/>
    <property type="match status" value="1"/>
</dbReference>
<dbReference type="InterPro" id="IPR023710">
    <property type="entry name" value="Phosphatase_YcdX_put"/>
</dbReference>
<dbReference type="InterPro" id="IPR004013">
    <property type="entry name" value="PHP_dom"/>
</dbReference>
<dbReference type="InterPro" id="IPR050243">
    <property type="entry name" value="PHP_phosphatase"/>
</dbReference>
<dbReference type="InterPro" id="IPR003141">
    <property type="entry name" value="Pol/His_phosphatase_N"/>
</dbReference>
<dbReference type="InterPro" id="IPR016195">
    <property type="entry name" value="Pol/histidinol_Pase-like"/>
</dbReference>
<dbReference type="NCBIfam" id="NF006702">
    <property type="entry name" value="PRK09248.1"/>
    <property type="match status" value="1"/>
</dbReference>
<dbReference type="PANTHER" id="PTHR36928">
    <property type="entry name" value="PHOSPHATASE YCDX-RELATED"/>
    <property type="match status" value="1"/>
</dbReference>
<dbReference type="PANTHER" id="PTHR36928:SF1">
    <property type="entry name" value="PHOSPHATASE YCDX-RELATED"/>
    <property type="match status" value="1"/>
</dbReference>
<dbReference type="Pfam" id="PF02811">
    <property type="entry name" value="PHP"/>
    <property type="match status" value="1"/>
</dbReference>
<dbReference type="SMART" id="SM00481">
    <property type="entry name" value="POLIIIAc"/>
    <property type="match status" value="1"/>
</dbReference>
<dbReference type="SUPFAM" id="SSF89550">
    <property type="entry name" value="PHP domain-like"/>
    <property type="match status" value="1"/>
</dbReference>
<proteinExistence type="inferred from homology"/>
<keyword id="KW-0378">Hydrolase</keyword>
<keyword id="KW-0479">Metal-binding</keyword>
<keyword id="KW-0862">Zinc</keyword>
<evidence type="ECO:0000255" key="1">
    <source>
        <dbReference type="HAMAP-Rule" id="MF_01561"/>
    </source>
</evidence>
<sequence length="245" mass="26906">MYPVDLHMHTVASTHAYSTLSDYIAEAKRKGIKLFAITDHGPDMEDAPHHWHFINMRIWPRLVDGVGILRGIEANIKNINGEIDCSGKMFDSLDLIIAGFHEPVFAPHDKETNTQAMIATIASGKVHIISHPGNPKYPVEVKAIAQAAAKHHVALEINNSSFLHSRKGSEDNCRAVAAAVRDAGGWVALGSDSHTAFTLGDFTECRKILDAVNFPEDRILNVSPQRLLAFLESRGMAPVPEFAEL</sequence>